<organism>
    <name type="scientific">Clostridium botulinum (strain Loch Maree / Type A3)</name>
    <dbReference type="NCBI Taxonomy" id="498214"/>
    <lineage>
        <taxon>Bacteria</taxon>
        <taxon>Bacillati</taxon>
        <taxon>Bacillota</taxon>
        <taxon>Clostridia</taxon>
        <taxon>Eubacteriales</taxon>
        <taxon>Clostridiaceae</taxon>
        <taxon>Clostridium</taxon>
    </lineage>
</organism>
<dbReference type="EC" id="3.5.1.44" evidence="1"/>
<dbReference type="EMBL" id="CP000962">
    <property type="protein sequence ID" value="ACA56464.1"/>
    <property type="molecule type" value="Genomic_DNA"/>
</dbReference>
<dbReference type="RefSeq" id="WP_003359122.1">
    <property type="nucleotide sequence ID" value="NC_010520.1"/>
</dbReference>
<dbReference type="SMR" id="B1KYG7"/>
<dbReference type="KEGG" id="cbl:CLK_2136"/>
<dbReference type="HOGENOM" id="CLU_087854_2_0_9"/>
<dbReference type="GO" id="GO:0050568">
    <property type="term" value="F:protein-glutamine glutaminase activity"/>
    <property type="evidence" value="ECO:0007669"/>
    <property type="project" value="UniProtKB-UniRule"/>
</dbReference>
<dbReference type="GO" id="GO:0006935">
    <property type="term" value="P:chemotaxis"/>
    <property type="evidence" value="ECO:0007669"/>
    <property type="project" value="UniProtKB-UniRule"/>
</dbReference>
<dbReference type="CDD" id="cd16352">
    <property type="entry name" value="CheD"/>
    <property type="match status" value="1"/>
</dbReference>
<dbReference type="Gene3D" id="3.30.1330.200">
    <property type="match status" value="1"/>
</dbReference>
<dbReference type="HAMAP" id="MF_01440">
    <property type="entry name" value="CheD"/>
    <property type="match status" value="1"/>
</dbReference>
<dbReference type="InterPro" id="IPR038592">
    <property type="entry name" value="CheD-like_sf"/>
</dbReference>
<dbReference type="InterPro" id="IPR005659">
    <property type="entry name" value="Chemorcpt_Glu_NH3ase_CheD"/>
</dbReference>
<dbReference type="InterPro" id="IPR011324">
    <property type="entry name" value="Cytotoxic_necrot_fac-like_cat"/>
</dbReference>
<dbReference type="NCBIfam" id="NF010015">
    <property type="entry name" value="PRK13490.1"/>
    <property type="match status" value="1"/>
</dbReference>
<dbReference type="PANTHER" id="PTHR35147">
    <property type="entry name" value="CHEMORECEPTOR GLUTAMINE DEAMIDASE CHED-RELATED"/>
    <property type="match status" value="1"/>
</dbReference>
<dbReference type="PANTHER" id="PTHR35147:SF1">
    <property type="entry name" value="CHEMORECEPTOR GLUTAMINE DEAMIDASE CHED-RELATED"/>
    <property type="match status" value="1"/>
</dbReference>
<dbReference type="Pfam" id="PF03975">
    <property type="entry name" value="CheD"/>
    <property type="match status" value="1"/>
</dbReference>
<dbReference type="SUPFAM" id="SSF64438">
    <property type="entry name" value="CNF1/YfiH-like putative cysteine hydrolases"/>
    <property type="match status" value="1"/>
</dbReference>
<accession>B1KYG7</accession>
<protein>
    <recommendedName>
        <fullName evidence="1">Probable chemoreceptor glutamine deamidase CheD</fullName>
        <ecNumber evidence="1">3.5.1.44</ecNumber>
    </recommendedName>
</protein>
<name>CHED_CLOBM</name>
<proteinExistence type="inferred from homology"/>
<comment type="function">
    <text evidence="1">Probably deamidates glutamine residues to glutamate on methyl-accepting chemotaxis receptors (MCPs), playing an important role in chemotaxis.</text>
</comment>
<comment type="catalytic activity">
    <reaction evidence="1">
        <text>L-glutaminyl-[protein] + H2O = L-glutamyl-[protein] + NH4(+)</text>
        <dbReference type="Rhea" id="RHEA:16441"/>
        <dbReference type="Rhea" id="RHEA-COMP:10207"/>
        <dbReference type="Rhea" id="RHEA-COMP:10208"/>
        <dbReference type="ChEBI" id="CHEBI:15377"/>
        <dbReference type="ChEBI" id="CHEBI:28938"/>
        <dbReference type="ChEBI" id="CHEBI:29973"/>
        <dbReference type="ChEBI" id="CHEBI:30011"/>
        <dbReference type="EC" id="3.5.1.44"/>
    </reaction>
</comment>
<comment type="similarity">
    <text evidence="1">Belongs to the CheD family.</text>
</comment>
<sequence>MDIKEIKVGIADLNVGKNPDKIITVGLGSCIGIALYDGIKCIGGLSHIMLPDSTQFSKVTNPMKFADLAIPILVEKMEKLGARKNGLKAKICGGASMFNFSDKSMVMDIGNRNGKAVKEKLKELSIPLLAEDIGGNKGRTMIFDTSTGKVYIKTVGLGTKEI</sequence>
<feature type="chain" id="PRO_1000145890" description="Probable chemoreceptor glutamine deamidase CheD">
    <location>
        <begin position="1"/>
        <end position="162"/>
    </location>
</feature>
<reference key="1">
    <citation type="journal article" date="2007" name="PLoS ONE">
        <title>Analysis of the neurotoxin complex genes in Clostridium botulinum A1-A4 and B1 strains: BoNT/A3, /Ba4 and /B1 clusters are located within plasmids.</title>
        <authorList>
            <person name="Smith T.J."/>
            <person name="Hill K.K."/>
            <person name="Foley B.T."/>
            <person name="Detter J.C."/>
            <person name="Munk A.C."/>
            <person name="Bruce D.C."/>
            <person name="Doggett N.A."/>
            <person name="Smith L.A."/>
            <person name="Marks J.D."/>
            <person name="Xie G."/>
            <person name="Brettin T.S."/>
        </authorList>
    </citation>
    <scope>NUCLEOTIDE SEQUENCE [LARGE SCALE GENOMIC DNA]</scope>
    <source>
        <strain>Loch Maree / Type A3</strain>
    </source>
</reference>
<keyword id="KW-0145">Chemotaxis</keyword>
<keyword id="KW-0378">Hydrolase</keyword>
<evidence type="ECO:0000255" key="1">
    <source>
        <dbReference type="HAMAP-Rule" id="MF_01440"/>
    </source>
</evidence>
<gene>
    <name evidence="1" type="primary">cheD</name>
    <name type="ordered locus">CLK_2136</name>
</gene>